<feature type="chain" id="PRO_0000329900" description="Polyribonucleotide nucleotidyltransferase">
    <location>
        <begin position="1"/>
        <end position="712"/>
    </location>
</feature>
<feature type="domain" description="KH" evidence="1">
    <location>
        <begin position="560"/>
        <end position="619"/>
    </location>
</feature>
<feature type="domain" description="S1 motif" evidence="1">
    <location>
        <begin position="629"/>
        <end position="697"/>
    </location>
</feature>
<feature type="binding site" evidence="1">
    <location>
        <position position="493"/>
    </location>
    <ligand>
        <name>Mg(2+)</name>
        <dbReference type="ChEBI" id="CHEBI:18420"/>
    </ligand>
</feature>
<feature type="binding site" evidence="1">
    <location>
        <position position="499"/>
    </location>
    <ligand>
        <name>Mg(2+)</name>
        <dbReference type="ChEBI" id="CHEBI:18420"/>
    </ligand>
</feature>
<name>PNP_SYNJA</name>
<evidence type="ECO:0000255" key="1">
    <source>
        <dbReference type="HAMAP-Rule" id="MF_01595"/>
    </source>
</evidence>
<accession>Q2JQF4</accession>
<proteinExistence type="inferred from homology"/>
<reference key="1">
    <citation type="journal article" date="2007" name="ISME J.">
        <title>Population level functional diversity in a microbial community revealed by comparative genomic and metagenomic analyses.</title>
        <authorList>
            <person name="Bhaya D."/>
            <person name="Grossman A.R."/>
            <person name="Steunou A.-S."/>
            <person name="Khuri N."/>
            <person name="Cohan F.M."/>
            <person name="Hamamura N."/>
            <person name="Melendrez M.C."/>
            <person name="Bateson M.M."/>
            <person name="Ward D.M."/>
            <person name="Heidelberg J.F."/>
        </authorList>
    </citation>
    <scope>NUCLEOTIDE SEQUENCE [LARGE SCALE GENOMIC DNA]</scope>
    <source>
        <strain>JA-3-3Ab</strain>
    </source>
</reference>
<dbReference type="EC" id="2.7.7.8" evidence="1"/>
<dbReference type="EMBL" id="CP000239">
    <property type="protein sequence ID" value="ABD00357.1"/>
    <property type="molecule type" value="Genomic_DNA"/>
</dbReference>
<dbReference type="RefSeq" id="WP_011431030.1">
    <property type="nucleotide sequence ID" value="NC_007775.1"/>
</dbReference>
<dbReference type="SMR" id="Q2JQF4"/>
<dbReference type="STRING" id="321327.CYA_2218"/>
<dbReference type="KEGG" id="cya:CYA_2218"/>
<dbReference type="eggNOG" id="COG1185">
    <property type="taxonomic scope" value="Bacteria"/>
</dbReference>
<dbReference type="HOGENOM" id="CLU_004217_2_2_3"/>
<dbReference type="OrthoDB" id="9804305at2"/>
<dbReference type="Proteomes" id="UP000008818">
    <property type="component" value="Chromosome"/>
</dbReference>
<dbReference type="GO" id="GO:0005829">
    <property type="term" value="C:cytosol"/>
    <property type="evidence" value="ECO:0007669"/>
    <property type="project" value="TreeGrafter"/>
</dbReference>
<dbReference type="GO" id="GO:0000175">
    <property type="term" value="F:3'-5'-RNA exonuclease activity"/>
    <property type="evidence" value="ECO:0007669"/>
    <property type="project" value="TreeGrafter"/>
</dbReference>
<dbReference type="GO" id="GO:0000287">
    <property type="term" value="F:magnesium ion binding"/>
    <property type="evidence" value="ECO:0007669"/>
    <property type="project" value="UniProtKB-UniRule"/>
</dbReference>
<dbReference type="GO" id="GO:0004654">
    <property type="term" value="F:polyribonucleotide nucleotidyltransferase activity"/>
    <property type="evidence" value="ECO:0007669"/>
    <property type="project" value="UniProtKB-UniRule"/>
</dbReference>
<dbReference type="GO" id="GO:0003723">
    <property type="term" value="F:RNA binding"/>
    <property type="evidence" value="ECO:0007669"/>
    <property type="project" value="UniProtKB-UniRule"/>
</dbReference>
<dbReference type="GO" id="GO:0006402">
    <property type="term" value="P:mRNA catabolic process"/>
    <property type="evidence" value="ECO:0007669"/>
    <property type="project" value="UniProtKB-UniRule"/>
</dbReference>
<dbReference type="GO" id="GO:0006396">
    <property type="term" value="P:RNA processing"/>
    <property type="evidence" value="ECO:0007669"/>
    <property type="project" value="InterPro"/>
</dbReference>
<dbReference type="CDD" id="cd02393">
    <property type="entry name" value="KH-I_PNPase"/>
    <property type="match status" value="1"/>
</dbReference>
<dbReference type="CDD" id="cd11363">
    <property type="entry name" value="RNase_PH_PNPase_1"/>
    <property type="match status" value="1"/>
</dbReference>
<dbReference type="CDD" id="cd11364">
    <property type="entry name" value="RNase_PH_PNPase_2"/>
    <property type="match status" value="1"/>
</dbReference>
<dbReference type="CDD" id="cd04472">
    <property type="entry name" value="S1_PNPase"/>
    <property type="match status" value="1"/>
</dbReference>
<dbReference type="FunFam" id="3.30.1370.10:FF:000001">
    <property type="entry name" value="Polyribonucleotide nucleotidyltransferase"/>
    <property type="match status" value="1"/>
</dbReference>
<dbReference type="FunFam" id="3.30.230.70:FF:000001">
    <property type="entry name" value="Polyribonucleotide nucleotidyltransferase"/>
    <property type="match status" value="1"/>
</dbReference>
<dbReference type="FunFam" id="3.30.230.70:FF:000002">
    <property type="entry name" value="Polyribonucleotide nucleotidyltransferase"/>
    <property type="match status" value="1"/>
</dbReference>
<dbReference type="Gene3D" id="3.30.230.70">
    <property type="entry name" value="GHMP Kinase, N-terminal domain"/>
    <property type="match status" value="2"/>
</dbReference>
<dbReference type="Gene3D" id="3.30.1370.10">
    <property type="entry name" value="K Homology domain, type 1"/>
    <property type="match status" value="1"/>
</dbReference>
<dbReference type="Gene3D" id="2.40.50.140">
    <property type="entry name" value="Nucleic acid-binding proteins"/>
    <property type="match status" value="1"/>
</dbReference>
<dbReference type="HAMAP" id="MF_01595">
    <property type="entry name" value="PNPase"/>
    <property type="match status" value="1"/>
</dbReference>
<dbReference type="InterPro" id="IPR001247">
    <property type="entry name" value="ExoRNase_PH_dom1"/>
</dbReference>
<dbReference type="InterPro" id="IPR015847">
    <property type="entry name" value="ExoRNase_PH_dom2"/>
</dbReference>
<dbReference type="InterPro" id="IPR036345">
    <property type="entry name" value="ExoRNase_PH_dom2_sf"/>
</dbReference>
<dbReference type="InterPro" id="IPR004087">
    <property type="entry name" value="KH_dom"/>
</dbReference>
<dbReference type="InterPro" id="IPR004088">
    <property type="entry name" value="KH_dom_type_1"/>
</dbReference>
<dbReference type="InterPro" id="IPR036612">
    <property type="entry name" value="KH_dom_type_1_sf"/>
</dbReference>
<dbReference type="InterPro" id="IPR012340">
    <property type="entry name" value="NA-bd_OB-fold"/>
</dbReference>
<dbReference type="InterPro" id="IPR012162">
    <property type="entry name" value="PNPase"/>
</dbReference>
<dbReference type="InterPro" id="IPR027408">
    <property type="entry name" value="PNPase/RNase_PH_dom_sf"/>
</dbReference>
<dbReference type="InterPro" id="IPR015848">
    <property type="entry name" value="PNPase_PH_RNA-bd_bac/org-type"/>
</dbReference>
<dbReference type="InterPro" id="IPR036456">
    <property type="entry name" value="PNPase_PH_RNA-bd_sf"/>
</dbReference>
<dbReference type="InterPro" id="IPR020568">
    <property type="entry name" value="Ribosomal_Su5_D2-typ_SF"/>
</dbReference>
<dbReference type="InterPro" id="IPR003029">
    <property type="entry name" value="S1_domain"/>
</dbReference>
<dbReference type="NCBIfam" id="TIGR03591">
    <property type="entry name" value="polynuc_phos"/>
    <property type="match status" value="1"/>
</dbReference>
<dbReference type="NCBIfam" id="NF008805">
    <property type="entry name" value="PRK11824.1"/>
    <property type="match status" value="1"/>
</dbReference>
<dbReference type="PANTHER" id="PTHR11252">
    <property type="entry name" value="POLYRIBONUCLEOTIDE NUCLEOTIDYLTRANSFERASE"/>
    <property type="match status" value="1"/>
</dbReference>
<dbReference type="PANTHER" id="PTHR11252:SF0">
    <property type="entry name" value="POLYRIBONUCLEOTIDE NUCLEOTIDYLTRANSFERASE 1, MITOCHONDRIAL"/>
    <property type="match status" value="1"/>
</dbReference>
<dbReference type="Pfam" id="PF00013">
    <property type="entry name" value="KH_1"/>
    <property type="match status" value="1"/>
</dbReference>
<dbReference type="Pfam" id="PF03726">
    <property type="entry name" value="PNPase"/>
    <property type="match status" value="1"/>
</dbReference>
<dbReference type="Pfam" id="PF01138">
    <property type="entry name" value="RNase_PH"/>
    <property type="match status" value="2"/>
</dbReference>
<dbReference type="Pfam" id="PF03725">
    <property type="entry name" value="RNase_PH_C"/>
    <property type="match status" value="2"/>
</dbReference>
<dbReference type="Pfam" id="PF00575">
    <property type="entry name" value="S1"/>
    <property type="match status" value="1"/>
</dbReference>
<dbReference type="PIRSF" id="PIRSF005499">
    <property type="entry name" value="PNPase"/>
    <property type="match status" value="1"/>
</dbReference>
<dbReference type="SMART" id="SM00322">
    <property type="entry name" value="KH"/>
    <property type="match status" value="1"/>
</dbReference>
<dbReference type="SMART" id="SM00316">
    <property type="entry name" value="S1"/>
    <property type="match status" value="1"/>
</dbReference>
<dbReference type="SUPFAM" id="SSF54791">
    <property type="entry name" value="Eukaryotic type KH-domain (KH-domain type I)"/>
    <property type="match status" value="1"/>
</dbReference>
<dbReference type="SUPFAM" id="SSF50249">
    <property type="entry name" value="Nucleic acid-binding proteins"/>
    <property type="match status" value="1"/>
</dbReference>
<dbReference type="SUPFAM" id="SSF46915">
    <property type="entry name" value="Polynucleotide phosphorylase/guanosine pentaphosphate synthase (PNPase/GPSI), domain 3"/>
    <property type="match status" value="1"/>
</dbReference>
<dbReference type="SUPFAM" id="SSF55666">
    <property type="entry name" value="Ribonuclease PH domain 2-like"/>
    <property type="match status" value="2"/>
</dbReference>
<dbReference type="SUPFAM" id="SSF54211">
    <property type="entry name" value="Ribosomal protein S5 domain 2-like"/>
    <property type="match status" value="2"/>
</dbReference>
<dbReference type="PROSITE" id="PS50084">
    <property type="entry name" value="KH_TYPE_1"/>
    <property type="match status" value="1"/>
</dbReference>
<dbReference type="PROSITE" id="PS50126">
    <property type="entry name" value="S1"/>
    <property type="match status" value="1"/>
</dbReference>
<sequence length="712" mass="77753">MAEYTRSISFYGREIDINIGLMAPQAGCGVWLTSGETSVLVTATRQAGRAGVDFLPLLVDYEERLYAAGRIPGGYLRREGRPPERATLISRLIDRPLRPLFPEWLRDDVQIVATTLSVDDKVPPDVLCILGASLAIHSARIPFNGPVAAVRVGLVKDEFIINPTYAEIEAGDLDLVVAGCADGVIMVEAGANQLPEKDVVEAIEFGFEAVQELLKAQQQVFADLNITPVELPPPPQNEELVAFVAEHAQEEIRSVLRQFLDKTSREQQLEAIKAKLEAQIQARPEGDPLRLYLLENPKELDNQFKALTKKLMRQQILQEGVRVDGRKLDEVRPVSCRVGLIPRVHGSALFNRGLTQVLSITTLGTPGDAQELDDLHPVDEKRYMHHYNFPGFSVGEVRPSRSPGRREIGHGALAERALVPVLPKEEEFPYVVRVVSEVLSSNGSTSMASVCGSTLSLMDAGVPIKAPVSGVAMGLIKEGDEVRILTDIQGIEDFLGDMDFKVAGTRAGITALQMDMKITGITVDVVEKALLQAKAGRDYILDKMLEVLPAPRPQLAKTAPRLLTFKVDPEDIGKIIGPGGKMVRSITEATGAKVDISDDGTITVSSSVGGQAEAARAMIENLVRRVEEGQVYLGKVTRIIPIGAFVEFLPGKEGMIHISQLAEYRVSRVEDEIAVADEVVVKVRSIDHKGRVNLTRLGISPEEAARVRNHHP</sequence>
<keyword id="KW-0963">Cytoplasm</keyword>
<keyword id="KW-0460">Magnesium</keyword>
<keyword id="KW-0479">Metal-binding</keyword>
<keyword id="KW-0548">Nucleotidyltransferase</keyword>
<keyword id="KW-0694">RNA-binding</keyword>
<keyword id="KW-0808">Transferase</keyword>
<comment type="function">
    <text evidence="1">Involved in mRNA degradation. Catalyzes the phosphorolysis of single-stranded polyribonucleotides processively in the 3'- to 5'-direction.</text>
</comment>
<comment type="catalytic activity">
    <reaction evidence="1">
        <text>RNA(n+1) + phosphate = RNA(n) + a ribonucleoside 5'-diphosphate</text>
        <dbReference type="Rhea" id="RHEA:22096"/>
        <dbReference type="Rhea" id="RHEA-COMP:14527"/>
        <dbReference type="Rhea" id="RHEA-COMP:17342"/>
        <dbReference type="ChEBI" id="CHEBI:43474"/>
        <dbReference type="ChEBI" id="CHEBI:57930"/>
        <dbReference type="ChEBI" id="CHEBI:140395"/>
        <dbReference type="EC" id="2.7.7.8"/>
    </reaction>
</comment>
<comment type="cofactor">
    <cofactor evidence="1">
        <name>Mg(2+)</name>
        <dbReference type="ChEBI" id="CHEBI:18420"/>
    </cofactor>
</comment>
<comment type="subcellular location">
    <subcellularLocation>
        <location evidence="1">Cytoplasm</location>
    </subcellularLocation>
</comment>
<comment type="similarity">
    <text evidence="1">Belongs to the polyribonucleotide nucleotidyltransferase family.</text>
</comment>
<organism>
    <name type="scientific">Synechococcus sp. (strain JA-3-3Ab)</name>
    <name type="common">Cyanobacteria bacterium Yellowstone A-Prime</name>
    <dbReference type="NCBI Taxonomy" id="321327"/>
    <lineage>
        <taxon>Bacteria</taxon>
        <taxon>Bacillati</taxon>
        <taxon>Cyanobacteriota</taxon>
        <taxon>Cyanophyceae</taxon>
        <taxon>Synechococcales</taxon>
        <taxon>Synechococcaceae</taxon>
        <taxon>Synechococcus</taxon>
    </lineage>
</organism>
<protein>
    <recommendedName>
        <fullName evidence="1">Polyribonucleotide nucleotidyltransferase</fullName>
        <ecNumber evidence="1">2.7.7.8</ecNumber>
    </recommendedName>
    <alternativeName>
        <fullName evidence="1">Polynucleotide phosphorylase</fullName>
        <shortName evidence="1">PNPase</shortName>
    </alternativeName>
</protein>
<gene>
    <name evidence="1" type="primary">pnp</name>
    <name type="ordered locus">CYA_2218</name>
</gene>